<dbReference type="EC" id="1.17.1.8" evidence="1"/>
<dbReference type="EMBL" id="AE017180">
    <property type="protein sequence ID" value="AAR33495.1"/>
    <property type="molecule type" value="Genomic_DNA"/>
</dbReference>
<dbReference type="RefSeq" id="NP_951222.1">
    <property type="nucleotide sequence ID" value="NC_002939.5"/>
</dbReference>
<dbReference type="RefSeq" id="WP_010940836.1">
    <property type="nucleotide sequence ID" value="NC_002939.5"/>
</dbReference>
<dbReference type="SMR" id="Q74GT5"/>
<dbReference type="FunCoup" id="Q74GT5">
    <property type="interactions" value="534"/>
</dbReference>
<dbReference type="STRING" id="243231.GSU0160"/>
<dbReference type="EnsemblBacteria" id="AAR33495">
    <property type="protein sequence ID" value="AAR33495"/>
    <property type="gene ID" value="GSU0160"/>
</dbReference>
<dbReference type="KEGG" id="gsu:GSU0160"/>
<dbReference type="PATRIC" id="fig|243231.5.peg.161"/>
<dbReference type="eggNOG" id="COG0289">
    <property type="taxonomic scope" value="Bacteria"/>
</dbReference>
<dbReference type="HOGENOM" id="CLU_047479_2_1_7"/>
<dbReference type="InParanoid" id="Q74GT5"/>
<dbReference type="OrthoDB" id="9790352at2"/>
<dbReference type="UniPathway" id="UPA00034">
    <property type="reaction ID" value="UER00018"/>
</dbReference>
<dbReference type="Proteomes" id="UP000000577">
    <property type="component" value="Chromosome"/>
</dbReference>
<dbReference type="GO" id="GO:0005829">
    <property type="term" value="C:cytosol"/>
    <property type="evidence" value="ECO:0000318"/>
    <property type="project" value="GO_Central"/>
</dbReference>
<dbReference type="GO" id="GO:0008839">
    <property type="term" value="F:4-hydroxy-tetrahydrodipicolinate reductase"/>
    <property type="evidence" value="ECO:0000318"/>
    <property type="project" value="GO_Central"/>
</dbReference>
<dbReference type="GO" id="GO:0051287">
    <property type="term" value="F:NAD binding"/>
    <property type="evidence" value="ECO:0007669"/>
    <property type="project" value="UniProtKB-UniRule"/>
</dbReference>
<dbReference type="GO" id="GO:0050661">
    <property type="term" value="F:NADP binding"/>
    <property type="evidence" value="ECO:0007669"/>
    <property type="project" value="UniProtKB-UniRule"/>
</dbReference>
<dbReference type="GO" id="GO:0016726">
    <property type="term" value="F:oxidoreductase activity, acting on CH or CH2 groups, NAD or NADP as acceptor"/>
    <property type="evidence" value="ECO:0007669"/>
    <property type="project" value="UniProtKB-UniRule"/>
</dbReference>
<dbReference type="GO" id="GO:0019877">
    <property type="term" value="P:diaminopimelate biosynthetic process"/>
    <property type="evidence" value="ECO:0000318"/>
    <property type="project" value="GO_Central"/>
</dbReference>
<dbReference type="GO" id="GO:0009089">
    <property type="term" value="P:lysine biosynthetic process via diaminopimelate"/>
    <property type="evidence" value="ECO:0007669"/>
    <property type="project" value="UniProtKB-UniRule"/>
</dbReference>
<dbReference type="CDD" id="cd02274">
    <property type="entry name" value="DHDPR_N"/>
    <property type="match status" value="1"/>
</dbReference>
<dbReference type="FunFam" id="3.30.360.10:FF:000004">
    <property type="entry name" value="4-hydroxy-tetrahydrodipicolinate reductase"/>
    <property type="match status" value="1"/>
</dbReference>
<dbReference type="FunFam" id="3.40.50.720:FF:000048">
    <property type="entry name" value="4-hydroxy-tetrahydrodipicolinate reductase"/>
    <property type="match status" value="1"/>
</dbReference>
<dbReference type="Gene3D" id="3.30.360.10">
    <property type="entry name" value="Dihydrodipicolinate Reductase, domain 2"/>
    <property type="match status" value="1"/>
</dbReference>
<dbReference type="Gene3D" id="3.40.50.720">
    <property type="entry name" value="NAD(P)-binding Rossmann-like Domain"/>
    <property type="match status" value="1"/>
</dbReference>
<dbReference type="HAMAP" id="MF_00102">
    <property type="entry name" value="DapB"/>
    <property type="match status" value="1"/>
</dbReference>
<dbReference type="InterPro" id="IPR022663">
    <property type="entry name" value="DapB_C"/>
</dbReference>
<dbReference type="InterPro" id="IPR000846">
    <property type="entry name" value="DapB_N"/>
</dbReference>
<dbReference type="InterPro" id="IPR022664">
    <property type="entry name" value="DapB_N_CS"/>
</dbReference>
<dbReference type="InterPro" id="IPR023940">
    <property type="entry name" value="DHDPR_bac"/>
</dbReference>
<dbReference type="InterPro" id="IPR036291">
    <property type="entry name" value="NAD(P)-bd_dom_sf"/>
</dbReference>
<dbReference type="NCBIfam" id="TIGR00036">
    <property type="entry name" value="dapB"/>
    <property type="match status" value="1"/>
</dbReference>
<dbReference type="PANTHER" id="PTHR20836:SF0">
    <property type="entry name" value="4-HYDROXY-TETRAHYDRODIPICOLINATE REDUCTASE 1, CHLOROPLASTIC-RELATED"/>
    <property type="match status" value="1"/>
</dbReference>
<dbReference type="PANTHER" id="PTHR20836">
    <property type="entry name" value="DIHYDRODIPICOLINATE REDUCTASE"/>
    <property type="match status" value="1"/>
</dbReference>
<dbReference type="Pfam" id="PF05173">
    <property type="entry name" value="DapB_C"/>
    <property type="match status" value="1"/>
</dbReference>
<dbReference type="Pfam" id="PF01113">
    <property type="entry name" value="DapB_N"/>
    <property type="match status" value="1"/>
</dbReference>
<dbReference type="PIRSF" id="PIRSF000161">
    <property type="entry name" value="DHPR"/>
    <property type="match status" value="1"/>
</dbReference>
<dbReference type="SUPFAM" id="SSF55347">
    <property type="entry name" value="Glyceraldehyde-3-phosphate dehydrogenase-like, C-terminal domain"/>
    <property type="match status" value="1"/>
</dbReference>
<dbReference type="SUPFAM" id="SSF51735">
    <property type="entry name" value="NAD(P)-binding Rossmann-fold domains"/>
    <property type="match status" value="1"/>
</dbReference>
<dbReference type="PROSITE" id="PS01298">
    <property type="entry name" value="DAPB"/>
    <property type="match status" value="1"/>
</dbReference>
<organism>
    <name type="scientific">Geobacter sulfurreducens (strain ATCC 51573 / DSM 12127 / PCA)</name>
    <dbReference type="NCBI Taxonomy" id="243231"/>
    <lineage>
        <taxon>Bacteria</taxon>
        <taxon>Pseudomonadati</taxon>
        <taxon>Thermodesulfobacteriota</taxon>
        <taxon>Desulfuromonadia</taxon>
        <taxon>Geobacterales</taxon>
        <taxon>Geobacteraceae</taxon>
        <taxon>Geobacter</taxon>
    </lineage>
</organism>
<comment type="function">
    <text evidence="1">Catalyzes the conversion of 4-hydroxy-tetrahydrodipicolinate (HTPA) to tetrahydrodipicolinate.</text>
</comment>
<comment type="catalytic activity">
    <reaction evidence="1">
        <text>(S)-2,3,4,5-tetrahydrodipicolinate + NAD(+) + H2O = (2S,4S)-4-hydroxy-2,3,4,5-tetrahydrodipicolinate + NADH + H(+)</text>
        <dbReference type="Rhea" id="RHEA:35323"/>
        <dbReference type="ChEBI" id="CHEBI:15377"/>
        <dbReference type="ChEBI" id="CHEBI:15378"/>
        <dbReference type="ChEBI" id="CHEBI:16845"/>
        <dbReference type="ChEBI" id="CHEBI:57540"/>
        <dbReference type="ChEBI" id="CHEBI:57945"/>
        <dbReference type="ChEBI" id="CHEBI:67139"/>
        <dbReference type="EC" id="1.17.1.8"/>
    </reaction>
</comment>
<comment type="catalytic activity">
    <reaction evidence="1">
        <text>(S)-2,3,4,5-tetrahydrodipicolinate + NADP(+) + H2O = (2S,4S)-4-hydroxy-2,3,4,5-tetrahydrodipicolinate + NADPH + H(+)</text>
        <dbReference type="Rhea" id="RHEA:35331"/>
        <dbReference type="ChEBI" id="CHEBI:15377"/>
        <dbReference type="ChEBI" id="CHEBI:15378"/>
        <dbReference type="ChEBI" id="CHEBI:16845"/>
        <dbReference type="ChEBI" id="CHEBI:57783"/>
        <dbReference type="ChEBI" id="CHEBI:58349"/>
        <dbReference type="ChEBI" id="CHEBI:67139"/>
        <dbReference type="EC" id="1.17.1.8"/>
    </reaction>
</comment>
<comment type="pathway">
    <text evidence="1">Amino-acid biosynthesis; L-lysine biosynthesis via DAP pathway; (S)-tetrahydrodipicolinate from L-aspartate: step 4/4.</text>
</comment>
<comment type="subcellular location">
    <subcellularLocation>
        <location evidence="1">Cytoplasm</location>
    </subcellularLocation>
</comment>
<comment type="similarity">
    <text evidence="1">Belongs to the DapB family.</text>
</comment>
<comment type="caution">
    <text evidence="2">Was originally thought to be a dihydrodipicolinate reductase (DHDPR), catalyzing the conversion of dihydrodipicolinate to tetrahydrodipicolinate. However, it was shown in E.coli that the substrate of the enzymatic reaction is not dihydrodipicolinate (DHDP) but in fact (2S,4S)-4-hydroxy-2,3,4,5-tetrahydrodipicolinic acid (HTPA), the product released by the DapA-catalyzed reaction.</text>
</comment>
<proteinExistence type="inferred from homology"/>
<gene>
    <name evidence="1" type="primary">dapB</name>
    <name type="ordered locus">GSU0160</name>
</gene>
<reference key="1">
    <citation type="journal article" date="2003" name="Science">
        <title>Genome of Geobacter sulfurreducens: metal reduction in subsurface environments.</title>
        <authorList>
            <person name="Methe B.A."/>
            <person name="Nelson K.E."/>
            <person name="Eisen J.A."/>
            <person name="Paulsen I.T."/>
            <person name="Nelson W.C."/>
            <person name="Heidelberg J.F."/>
            <person name="Wu D."/>
            <person name="Wu M."/>
            <person name="Ward N.L."/>
            <person name="Beanan M.J."/>
            <person name="Dodson R.J."/>
            <person name="Madupu R."/>
            <person name="Brinkac L.M."/>
            <person name="Daugherty S.C."/>
            <person name="DeBoy R.T."/>
            <person name="Durkin A.S."/>
            <person name="Gwinn M.L."/>
            <person name="Kolonay J.F."/>
            <person name="Sullivan S.A."/>
            <person name="Haft D.H."/>
            <person name="Selengut J."/>
            <person name="Davidsen T.M."/>
            <person name="Zafar N."/>
            <person name="White O."/>
            <person name="Tran B."/>
            <person name="Romero C."/>
            <person name="Forberger H.A."/>
            <person name="Weidman J.F."/>
            <person name="Khouri H.M."/>
            <person name="Feldblyum T.V."/>
            <person name="Utterback T.R."/>
            <person name="Van Aken S.E."/>
            <person name="Lovley D.R."/>
            <person name="Fraser C.M."/>
        </authorList>
    </citation>
    <scope>NUCLEOTIDE SEQUENCE [LARGE SCALE GENOMIC DNA]</scope>
    <source>
        <strain>ATCC 51573 / DSM 12127 / PCA</strain>
    </source>
</reference>
<sequence>MTKIAVCGAAGRMGQRIIVAAREAGCTISGALERPGHEMVGQDAGLIAGCGALGVAISDDLNAVVEGCDVLIDFTTPKVSLKNLEVCALKKKSIVIGSTGFTPEERALAVELAREIPAVLAPNMSVGVNVCFKILKDVAKTLGDDFDVEIVELHHNKKKDAPSGTAVRMGEVVAEALGRDYNKVATYHREGICGERTKEEIGMQTVRGGDIVGEHTVYFIGMGERIEISHRAMTRDMFSRGSVRAAQWVVGKAPGLYDMQDVLGLK</sequence>
<keyword id="KW-0028">Amino-acid biosynthesis</keyword>
<keyword id="KW-0963">Cytoplasm</keyword>
<keyword id="KW-0220">Diaminopimelate biosynthesis</keyword>
<keyword id="KW-0457">Lysine biosynthesis</keyword>
<keyword id="KW-0520">NAD</keyword>
<keyword id="KW-0521">NADP</keyword>
<keyword id="KW-0560">Oxidoreductase</keyword>
<keyword id="KW-1185">Reference proteome</keyword>
<protein>
    <recommendedName>
        <fullName evidence="1">4-hydroxy-tetrahydrodipicolinate reductase</fullName>
        <shortName evidence="1">HTPA reductase</shortName>
        <ecNumber evidence="1">1.17.1.8</ecNumber>
    </recommendedName>
</protein>
<accession>Q74GT5</accession>
<evidence type="ECO:0000255" key="1">
    <source>
        <dbReference type="HAMAP-Rule" id="MF_00102"/>
    </source>
</evidence>
<evidence type="ECO:0000305" key="2"/>
<name>DAPB_GEOSL</name>
<feature type="chain" id="PRO_0000228353" description="4-hydroxy-tetrahydrodipicolinate reductase">
    <location>
        <begin position="1"/>
        <end position="266"/>
    </location>
</feature>
<feature type="active site" description="Proton donor/acceptor" evidence="1">
    <location>
        <position position="154"/>
    </location>
</feature>
<feature type="active site" description="Proton donor" evidence="1">
    <location>
        <position position="158"/>
    </location>
</feature>
<feature type="binding site" evidence="1">
    <location>
        <begin position="8"/>
        <end position="13"/>
    </location>
    <ligand>
        <name>NAD(+)</name>
        <dbReference type="ChEBI" id="CHEBI:57540"/>
    </ligand>
</feature>
<feature type="binding site" evidence="1">
    <location>
        <position position="33"/>
    </location>
    <ligand>
        <name>NAD(+)</name>
        <dbReference type="ChEBI" id="CHEBI:57540"/>
    </ligand>
</feature>
<feature type="binding site" evidence="1">
    <location>
        <position position="34"/>
    </location>
    <ligand>
        <name>NADP(+)</name>
        <dbReference type="ChEBI" id="CHEBI:58349"/>
    </ligand>
</feature>
<feature type="binding site" evidence="1">
    <location>
        <begin position="97"/>
        <end position="99"/>
    </location>
    <ligand>
        <name>NAD(+)</name>
        <dbReference type="ChEBI" id="CHEBI:57540"/>
    </ligand>
</feature>
<feature type="binding site" evidence="1">
    <location>
        <begin position="121"/>
        <end position="124"/>
    </location>
    <ligand>
        <name>NAD(+)</name>
        <dbReference type="ChEBI" id="CHEBI:57540"/>
    </ligand>
</feature>
<feature type="binding site" evidence="1">
    <location>
        <position position="155"/>
    </location>
    <ligand>
        <name>(S)-2,3,4,5-tetrahydrodipicolinate</name>
        <dbReference type="ChEBI" id="CHEBI:16845"/>
    </ligand>
</feature>
<feature type="binding site" evidence="1">
    <location>
        <begin position="164"/>
        <end position="165"/>
    </location>
    <ligand>
        <name>(S)-2,3,4,5-tetrahydrodipicolinate</name>
        <dbReference type="ChEBI" id="CHEBI:16845"/>
    </ligand>
</feature>